<reference key="1">
    <citation type="journal article" date="2011" name="PLoS Genet.">
        <title>Comparative genomic analysis of human fungal pathogens causing paracoccidioidomycosis.</title>
        <authorList>
            <person name="Desjardins C.A."/>
            <person name="Champion M.D."/>
            <person name="Holder J.W."/>
            <person name="Muszewska A."/>
            <person name="Goldberg J."/>
            <person name="Bailao A.M."/>
            <person name="Brigido M.M."/>
            <person name="Ferreira M.E."/>
            <person name="Garcia A.M."/>
            <person name="Grynberg M."/>
            <person name="Gujja S."/>
            <person name="Heiman D.I."/>
            <person name="Henn M.R."/>
            <person name="Kodira C.D."/>
            <person name="Leon-Narvaez H."/>
            <person name="Longo L.V.G."/>
            <person name="Ma L.-J."/>
            <person name="Malavazi I."/>
            <person name="Matsuo A.L."/>
            <person name="Morais F.V."/>
            <person name="Pereira M."/>
            <person name="Rodriguez-Brito S."/>
            <person name="Sakthikumar S."/>
            <person name="Salem-Izacc S.M."/>
            <person name="Sykes S.M."/>
            <person name="Teixeira M.M."/>
            <person name="Vallejo M.C."/>
            <person name="Walter M.E."/>
            <person name="Yandava C."/>
            <person name="Young S."/>
            <person name="Zeng Q."/>
            <person name="Zucker J."/>
            <person name="Felipe M.S."/>
            <person name="Goldman G.H."/>
            <person name="Haas B.J."/>
            <person name="McEwen J.G."/>
            <person name="Nino-Vega G."/>
            <person name="Puccia R."/>
            <person name="San-Blas G."/>
            <person name="Soares C.M."/>
            <person name="Birren B.W."/>
            <person name="Cuomo C.A."/>
        </authorList>
    </citation>
    <scope>NUCLEOTIDE SEQUENCE [LARGE SCALE GENOMIC DNA]</scope>
    <source>
        <strain>ATCC MYA-826 / Pb01</strain>
    </source>
</reference>
<feature type="chain" id="PRO_0000407821" description="Nucleolar protein 9">
    <location>
        <begin position="1"/>
        <end position="689"/>
    </location>
</feature>
<feature type="repeat" description="Pumilio 1">
    <location>
        <begin position="108"/>
        <end position="143"/>
    </location>
</feature>
<feature type="repeat" description="Pumilio 2">
    <location>
        <begin position="291"/>
        <end position="334"/>
    </location>
</feature>
<feature type="repeat" description="Pumilio 3">
    <location>
        <begin position="382"/>
        <end position="419"/>
    </location>
</feature>
<feature type="repeat" description="Pumilio 4">
    <location>
        <begin position="524"/>
        <end position="562"/>
    </location>
</feature>
<feature type="repeat" description="Pumilio 5">
    <location>
        <begin position="563"/>
        <end position="600"/>
    </location>
</feature>
<feature type="region of interest" description="Disordered" evidence="2">
    <location>
        <begin position="1"/>
        <end position="39"/>
    </location>
</feature>
<feature type="region of interest" description="Disordered" evidence="2">
    <location>
        <begin position="477"/>
        <end position="496"/>
    </location>
</feature>
<feature type="region of interest" description="Disordered" evidence="2">
    <location>
        <begin position="670"/>
        <end position="689"/>
    </location>
</feature>
<feature type="compositionally biased region" description="Basic residues" evidence="2">
    <location>
        <begin position="1"/>
        <end position="15"/>
    </location>
</feature>
<feature type="compositionally biased region" description="Polar residues" evidence="2">
    <location>
        <begin position="677"/>
        <end position="689"/>
    </location>
</feature>
<proteinExistence type="inferred from homology"/>
<keyword id="KW-0539">Nucleus</keyword>
<keyword id="KW-1185">Reference proteome</keyword>
<keyword id="KW-0677">Repeat</keyword>
<keyword id="KW-0690">Ribosome biogenesis</keyword>
<keyword id="KW-0698">rRNA processing</keyword>
<gene>
    <name type="primary">NOP9</name>
    <name type="ORF">PAAG_07209</name>
</gene>
<evidence type="ECO:0000250" key="1"/>
<evidence type="ECO:0000256" key="2">
    <source>
        <dbReference type="SAM" id="MobiDB-lite"/>
    </source>
</evidence>
<evidence type="ECO:0000305" key="3"/>
<name>NOP9_PARBA</name>
<comment type="function">
    <text evidence="1">RNA-binding nucleolar protein required for pre-rRNA processing. Involved in production of 18S rRNA and assembly of small ribosomal subunit (By similarity).</text>
</comment>
<comment type="subcellular location">
    <subcellularLocation>
        <location evidence="1">Nucleus</location>
        <location evidence="1">Nucleolus</location>
    </subcellularLocation>
</comment>
<comment type="similarity">
    <text evidence="3">Belongs to the NOP9 family.</text>
</comment>
<sequence>MPREKQKRGRRAEAKRKRDDVITDPTVLKRQKSSDVSNYPNRSYEQLEIRGDYIPLDEELVDSTGTAFYGLLDIEEQEYFSHASGLLELNQFETEEEKSIFIERVYEEANGKELKIACSQSCSRLMEKLISASTVSQIKRLFSKFIGHFLDLVQHRFASHCCECLFIHAAQYVTSEMKKKSSKEKENLEEDSTSELQLEDLFLKAISELEGNWGYLLTERFASHTIRVLLLVLAGKPLRNPSTTTVIASRKKEYLASKVGTQLDPSISEKQAVPTSFNKALEKMMKDLVTGLDNTYLRALATHPVGNPVLQVLLSVELSHMGKSKAKDADSVLRRLVPDENLQEDGESATFLKGLFYDPVGSRLLETIVQDAPGKFFKLFYKIIVRERIGSFSRNEIAGHVVVRILERLSKEDLKSAMDLILPEVPPLVERSRLTVIKALIERGIVRGVDLGPLAATLLSAYGDDAVSRINNMLKLQRSNKENDGTTSSSNTSSPEQLHGSLLAQAMLKSTGPLCELVQSSLLAVTPETLISIAQDPVVSHVLQDALTLPTSTPQFRRQITSRLSGKIAELALHSSGSHVVDALWPATRDLIFVKQRFAEELVVHERALRDSFVGRAVWRNWSMDLYKRKRGSWIAIAKGLEDSAEVNLNTLTNKPKSNIDLARARFAAKANGSKEPANTPSKKIPTTS</sequence>
<dbReference type="EMBL" id="KN294013">
    <property type="protein sequence ID" value="EEH36791.1"/>
    <property type="molecule type" value="Genomic_DNA"/>
</dbReference>
<dbReference type="RefSeq" id="XP_002790973.1">
    <property type="nucleotide sequence ID" value="XM_002790927.1"/>
</dbReference>
<dbReference type="SMR" id="C1H8W8"/>
<dbReference type="STRING" id="502779.C1H8W8"/>
<dbReference type="GeneID" id="9094224"/>
<dbReference type="KEGG" id="pbl:PAAG_07209"/>
<dbReference type="VEuPathDB" id="FungiDB:PAAG_07209"/>
<dbReference type="eggNOG" id="KOG2188">
    <property type="taxonomic scope" value="Eukaryota"/>
</dbReference>
<dbReference type="HOGENOM" id="CLU_008720_1_1_1"/>
<dbReference type="OMA" id="HHLVRNF"/>
<dbReference type="OrthoDB" id="392571at2759"/>
<dbReference type="Proteomes" id="UP000002059">
    <property type="component" value="Partially assembled WGS sequence"/>
</dbReference>
<dbReference type="GO" id="GO:0030686">
    <property type="term" value="C:90S preribosome"/>
    <property type="evidence" value="ECO:0007669"/>
    <property type="project" value="TreeGrafter"/>
</dbReference>
<dbReference type="GO" id="GO:0005730">
    <property type="term" value="C:nucleolus"/>
    <property type="evidence" value="ECO:0007669"/>
    <property type="project" value="UniProtKB-SubCell"/>
</dbReference>
<dbReference type="GO" id="GO:0030688">
    <property type="term" value="C:preribosome, small subunit precursor"/>
    <property type="evidence" value="ECO:0007669"/>
    <property type="project" value="TreeGrafter"/>
</dbReference>
<dbReference type="GO" id="GO:0003723">
    <property type="term" value="F:RNA binding"/>
    <property type="evidence" value="ECO:0007669"/>
    <property type="project" value="InterPro"/>
</dbReference>
<dbReference type="GO" id="GO:0000480">
    <property type="term" value="P:endonucleolytic cleavage in 5'-ETS of tricistronic rRNA transcript (SSU-rRNA, 5.8S rRNA, LSU-rRNA)"/>
    <property type="evidence" value="ECO:0007669"/>
    <property type="project" value="TreeGrafter"/>
</dbReference>
<dbReference type="GO" id="GO:0000447">
    <property type="term" value="P:endonucleolytic cleavage in ITS1 to separate SSU-rRNA from 5.8S rRNA and LSU-rRNA from tricistronic rRNA transcript (SSU-rRNA, 5.8S rRNA, LSU-rRNA)"/>
    <property type="evidence" value="ECO:0007669"/>
    <property type="project" value="TreeGrafter"/>
</dbReference>
<dbReference type="GO" id="GO:0000472">
    <property type="term" value="P:endonucleolytic cleavage to generate mature 5'-end of SSU-rRNA from (SSU-rRNA, 5.8S rRNA, LSU-rRNA)"/>
    <property type="evidence" value="ECO:0007669"/>
    <property type="project" value="TreeGrafter"/>
</dbReference>
<dbReference type="GO" id="GO:0000056">
    <property type="term" value="P:ribosomal small subunit export from nucleus"/>
    <property type="evidence" value="ECO:0007669"/>
    <property type="project" value="TreeGrafter"/>
</dbReference>
<dbReference type="Gene3D" id="1.25.10.10">
    <property type="entry name" value="Leucine-rich Repeat Variant"/>
    <property type="match status" value="3"/>
</dbReference>
<dbReference type="InterPro" id="IPR011989">
    <property type="entry name" value="ARM-like"/>
</dbReference>
<dbReference type="InterPro" id="IPR016024">
    <property type="entry name" value="ARM-type_fold"/>
</dbReference>
<dbReference type="InterPro" id="IPR040000">
    <property type="entry name" value="NOP9"/>
</dbReference>
<dbReference type="InterPro" id="IPR001313">
    <property type="entry name" value="Pumilio_RNA-bd_rpt"/>
</dbReference>
<dbReference type="PANTHER" id="PTHR13102">
    <property type="entry name" value="NUCLEOLAR PROTEIN 9"/>
    <property type="match status" value="1"/>
</dbReference>
<dbReference type="PANTHER" id="PTHR13102:SF0">
    <property type="entry name" value="NUCLEOLAR PROTEIN 9"/>
    <property type="match status" value="1"/>
</dbReference>
<dbReference type="Pfam" id="PF22493">
    <property type="entry name" value="PUF_NOP9"/>
    <property type="match status" value="1"/>
</dbReference>
<dbReference type="SMART" id="SM00025">
    <property type="entry name" value="Pumilio"/>
    <property type="match status" value="6"/>
</dbReference>
<dbReference type="SUPFAM" id="SSF48371">
    <property type="entry name" value="ARM repeat"/>
    <property type="match status" value="1"/>
</dbReference>
<accession>C1H8W8</accession>
<organism>
    <name type="scientific">Paracoccidioides lutzii (strain ATCC MYA-826 / Pb01)</name>
    <name type="common">Paracoccidioides brasiliensis</name>
    <dbReference type="NCBI Taxonomy" id="502779"/>
    <lineage>
        <taxon>Eukaryota</taxon>
        <taxon>Fungi</taxon>
        <taxon>Dikarya</taxon>
        <taxon>Ascomycota</taxon>
        <taxon>Pezizomycotina</taxon>
        <taxon>Eurotiomycetes</taxon>
        <taxon>Eurotiomycetidae</taxon>
        <taxon>Onygenales</taxon>
        <taxon>Ajellomycetaceae</taxon>
        <taxon>Paracoccidioides</taxon>
    </lineage>
</organism>
<protein>
    <recommendedName>
        <fullName>Nucleolar protein 9</fullName>
    </recommendedName>
    <alternativeName>
        <fullName>Pumilio domain-containing protein NOP9</fullName>
    </alternativeName>
</protein>